<gene>
    <name type="primary">asa1</name>
    <name type="ORF">MGG_01888</name>
</gene>
<proteinExistence type="inferred from homology"/>
<dbReference type="EMBL" id="CM001232">
    <property type="protein sequence ID" value="EHA55101.1"/>
    <property type="molecule type" value="Genomic_DNA"/>
</dbReference>
<dbReference type="RefSeq" id="XP_003714908.1">
    <property type="nucleotide sequence ID" value="XM_003714860.1"/>
</dbReference>
<dbReference type="FunCoup" id="A4RJA0">
    <property type="interactions" value="51"/>
</dbReference>
<dbReference type="STRING" id="242507.A4RJA0"/>
<dbReference type="EnsemblFungi" id="MGG_01888T0">
    <property type="protein sequence ID" value="MGG_01888T0"/>
    <property type="gene ID" value="MGG_01888"/>
</dbReference>
<dbReference type="GeneID" id="2679563"/>
<dbReference type="KEGG" id="mgr:MGG_01888"/>
<dbReference type="VEuPathDB" id="FungiDB:MGG_01888"/>
<dbReference type="eggNOG" id="KOG0322">
    <property type="taxonomic scope" value="Eukaryota"/>
</dbReference>
<dbReference type="HOGENOM" id="CLU_041940_0_1_1"/>
<dbReference type="InParanoid" id="A4RJA0"/>
<dbReference type="OMA" id="WHKEGVY"/>
<dbReference type="OrthoDB" id="7668193at2759"/>
<dbReference type="Proteomes" id="UP000009058">
    <property type="component" value="Chromosome 2"/>
</dbReference>
<dbReference type="GO" id="GO:0005634">
    <property type="term" value="C:nucleus"/>
    <property type="evidence" value="ECO:0007669"/>
    <property type="project" value="UniProtKB-SubCell"/>
</dbReference>
<dbReference type="GO" id="GO:0006325">
    <property type="term" value="P:chromatin organization"/>
    <property type="evidence" value="ECO:0007669"/>
    <property type="project" value="UniProtKB-KW"/>
</dbReference>
<dbReference type="Gene3D" id="2.130.10.10">
    <property type="entry name" value="YVTN repeat-like/Quinoprotein amine dehydrogenase"/>
    <property type="match status" value="2"/>
</dbReference>
<dbReference type="InterPro" id="IPR015943">
    <property type="entry name" value="WD40/YVTN_repeat-like_dom_sf"/>
</dbReference>
<dbReference type="InterPro" id="IPR019775">
    <property type="entry name" value="WD40_repeat_CS"/>
</dbReference>
<dbReference type="InterPro" id="IPR036322">
    <property type="entry name" value="WD40_repeat_dom_sf"/>
</dbReference>
<dbReference type="InterPro" id="IPR001680">
    <property type="entry name" value="WD40_rpt"/>
</dbReference>
<dbReference type="PANTHER" id="PTHR19854:SF1">
    <property type="entry name" value="GUANINE NUCLEOTIDE-BINDING PROTEIN SUBUNIT BETA-LIKE PROTEIN 1"/>
    <property type="match status" value="1"/>
</dbReference>
<dbReference type="PANTHER" id="PTHR19854">
    <property type="entry name" value="TRANSDUCIN BETA-LIKE 3"/>
    <property type="match status" value="1"/>
</dbReference>
<dbReference type="Pfam" id="PF00400">
    <property type="entry name" value="WD40"/>
    <property type="match status" value="3"/>
</dbReference>
<dbReference type="SMART" id="SM00320">
    <property type="entry name" value="WD40"/>
    <property type="match status" value="5"/>
</dbReference>
<dbReference type="SUPFAM" id="SSF50978">
    <property type="entry name" value="WD40 repeat-like"/>
    <property type="match status" value="1"/>
</dbReference>
<dbReference type="PROSITE" id="PS00678">
    <property type="entry name" value="WD_REPEATS_1"/>
    <property type="match status" value="2"/>
</dbReference>
<dbReference type="PROSITE" id="PS50082">
    <property type="entry name" value="WD_REPEATS_2"/>
    <property type="match status" value="2"/>
</dbReference>
<dbReference type="PROSITE" id="PS50294">
    <property type="entry name" value="WD_REPEATS_REGION"/>
    <property type="match status" value="1"/>
</dbReference>
<feature type="chain" id="PRO_0000402214" description="ASTRA-associated protein 1">
    <location>
        <begin position="1"/>
        <end position="469"/>
    </location>
</feature>
<feature type="repeat" description="WD 1">
    <location>
        <begin position="21"/>
        <end position="60"/>
    </location>
</feature>
<feature type="repeat" description="WD 2">
    <location>
        <begin position="63"/>
        <end position="101"/>
    </location>
</feature>
<feature type="repeat" description="WD 3">
    <location>
        <begin position="232"/>
        <end position="271"/>
    </location>
</feature>
<feature type="repeat" description="WD 4">
    <location>
        <begin position="361"/>
        <end position="400"/>
    </location>
</feature>
<feature type="repeat" description="WD 5">
    <location>
        <begin position="437"/>
        <end position="469"/>
    </location>
</feature>
<feature type="region of interest" description="Disordered" evidence="2">
    <location>
        <begin position="260"/>
        <end position="354"/>
    </location>
</feature>
<feature type="compositionally biased region" description="Polar residues" evidence="2">
    <location>
        <begin position="280"/>
        <end position="290"/>
    </location>
</feature>
<feature type="compositionally biased region" description="Pro residues" evidence="2">
    <location>
        <begin position="301"/>
        <end position="312"/>
    </location>
</feature>
<feature type="compositionally biased region" description="Low complexity" evidence="2">
    <location>
        <begin position="313"/>
        <end position="332"/>
    </location>
</feature>
<feature type="compositionally biased region" description="Polar residues" evidence="2">
    <location>
        <begin position="333"/>
        <end position="352"/>
    </location>
</feature>
<organism>
    <name type="scientific">Pyricularia oryzae (strain 70-15 / ATCC MYA-4617 / FGSC 8958)</name>
    <name type="common">Rice blast fungus</name>
    <name type="synonym">Magnaporthe oryzae</name>
    <dbReference type="NCBI Taxonomy" id="242507"/>
    <lineage>
        <taxon>Eukaryota</taxon>
        <taxon>Fungi</taxon>
        <taxon>Dikarya</taxon>
        <taxon>Ascomycota</taxon>
        <taxon>Pezizomycotina</taxon>
        <taxon>Sordariomycetes</taxon>
        <taxon>Sordariomycetidae</taxon>
        <taxon>Magnaporthales</taxon>
        <taxon>Pyriculariaceae</taxon>
        <taxon>Pyricularia</taxon>
    </lineage>
</organism>
<keyword id="KW-0156">Chromatin regulator</keyword>
<keyword id="KW-0539">Nucleus</keyword>
<keyword id="KW-1185">Reference proteome</keyword>
<keyword id="KW-0677">Repeat</keyword>
<keyword id="KW-0853">WD repeat</keyword>
<name>ASA1_PYRO7</name>
<accession>A4RJA0</accession>
<accession>G4MWP6</accession>
<comment type="function">
    <text evidence="1">Component of the ASTRA complex involved in chromatin remodeling.</text>
</comment>
<comment type="subunit">
    <text evidence="1">Component of the ASTRA chromatin remodeling machinery complex.</text>
</comment>
<comment type="subcellular location">
    <subcellularLocation>
        <location evidence="1">Nucleus</location>
    </subcellularLocation>
</comment>
<comment type="similarity">
    <text evidence="3">Belongs to the WD repeat ASA1 family.</text>
</comment>
<evidence type="ECO:0000250" key="1"/>
<evidence type="ECO:0000256" key="2">
    <source>
        <dbReference type="SAM" id="MobiDB-lite"/>
    </source>
</evidence>
<evidence type="ECO:0000305" key="3"/>
<sequence length="469" mass="50840">MSTSAAPVPAQPAHPRSILRGHKAQVHAAAFVRNNERLVTGDADGFVVVWDLTIMRPRAVWRAHDDVLLGIGGWGTDRLITHGRDNKLIVWQLREADEDSLAKTLPVDPAAEDRPKPWLLYMLEISTMNFCTFSLCEMSSDPLSEDREALIAVPNTLSSEAIDIFHLPSQKREHTIRLGQSEGMVMALELFRVDGYFTVAVGYENGVALVAQQAERSETPVGTWNVRYRSKAHTQPVLSLDVSLGRDFFLTSSADSLLIKHPIPPPQTSVLKTAREDGTTSEGANASVIDSQPPALASRPPDAPVAAPPATPGKPMSLLSAALAREAAGDSAESPTRRTTQPSDTPPESTLLSEPVKVVNTKHAGQQGLRIRSDGRIFATAGWDSRVRVYSCKTMKELAVLKWHQVGCFAVAFSTIDAPAGTQAEGARDGLAARMGDVTVKEKRISHAKSAHWLAAGSKDGKVSLWEIY</sequence>
<reference key="1">
    <citation type="journal article" date="2005" name="Nature">
        <title>The genome sequence of the rice blast fungus Magnaporthe grisea.</title>
        <authorList>
            <person name="Dean R.A."/>
            <person name="Talbot N.J."/>
            <person name="Ebbole D.J."/>
            <person name="Farman M.L."/>
            <person name="Mitchell T.K."/>
            <person name="Orbach M.J."/>
            <person name="Thon M.R."/>
            <person name="Kulkarni R."/>
            <person name="Xu J.-R."/>
            <person name="Pan H."/>
            <person name="Read N.D."/>
            <person name="Lee Y.-H."/>
            <person name="Carbone I."/>
            <person name="Brown D."/>
            <person name="Oh Y.Y."/>
            <person name="Donofrio N."/>
            <person name="Jeong J.S."/>
            <person name="Soanes D.M."/>
            <person name="Djonovic S."/>
            <person name="Kolomiets E."/>
            <person name="Rehmeyer C."/>
            <person name="Li W."/>
            <person name="Harding M."/>
            <person name="Kim S."/>
            <person name="Lebrun M.-H."/>
            <person name="Bohnert H."/>
            <person name="Coughlan S."/>
            <person name="Butler J."/>
            <person name="Calvo S.E."/>
            <person name="Ma L.-J."/>
            <person name="Nicol R."/>
            <person name="Purcell S."/>
            <person name="Nusbaum C."/>
            <person name="Galagan J.E."/>
            <person name="Birren B.W."/>
        </authorList>
    </citation>
    <scope>NUCLEOTIDE SEQUENCE [LARGE SCALE GENOMIC DNA]</scope>
    <source>
        <strain>70-15 / ATCC MYA-4617 / FGSC 8958</strain>
    </source>
</reference>
<protein>
    <recommendedName>
        <fullName>ASTRA-associated protein 1</fullName>
    </recommendedName>
</protein>